<name>FLGH_BURCM</name>
<reference key="1">
    <citation type="submission" date="2006-08" db="EMBL/GenBank/DDBJ databases">
        <title>Complete sequence of chromosome 1 of Burkholderia cepacia AMMD.</title>
        <authorList>
            <person name="Copeland A."/>
            <person name="Lucas S."/>
            <person name="Lapidus A."/>
            <person name="Barry K."/>
            <person name="Detter J.C."/>
            <person name="Glavina del Rio T."/>
            <person name="Hammon N."/>
            <person name="Israni S."/>
            <person name="Pitluck S."/>
            <person name="Bruce D."/>
            <person name="Chain P."/>
            <person name="Malfatti S."/>
            <person name="Shin M."/>
            <person name="Vergez L."/>
            <person name="Schmutz J."/>
            <person name="Larimer F."/>
            <person name="Land M."/>
            <person name="Hauser L."/>
            <person name="Kyrpides N."/>
            <person name="Kim E."/>
            <person name="Parke J."/>
            <person name="Coenye T."/>
            <person name="Konstantinidis K."/>
            <person name="Ramette A."/>
            <person name="Tiedje J."/>
            <person name="Richardson P."/>
        </authorList>
    </citation>
    <scope>NUCLEOTIDE SEQUENCE [LARGE SCALE GENOMIC DNA]</scope>
    <source>
        <strain>ATCC BAA-244 / DSM 16087 / CCUG 44356 / LMG 19182 / AMMD</strain>
    </source>
</reference>
<comment type="function">
    <text evidence="1">Assembles around the rod to form the L-ring and probably protects the motor/basal body from shearing forces during rotation.</text>
</comment>
<comment type="subunit">
    <text evidence="1">The basal body constitutes a major portion of the flagellar organelle and consists of four rings (L,P,S, and M) mounted on a central rod.</text>
</comment>
<comment type="subcellular location">
    <subcellularLocation>
        <location evidence="1">Cell outer membrane</location>
        <topology evidence="1">Lipid-anchor</topology>
    </subcellularLocation>
    <subcellularLocation>
        <location evidence="1">Bacterial flagellum basal body</location>
    </subcellularLocation>
</comment>
<comment type="similarity">
    <text evidence="1">Belongs to the FlgH family.</text>
</comment>
<organism>
    <name type="scientific">Burkholderia ambifaria (strain ATCC BAA-244 / DSM 16087 / CCUG 44356 / LMG 19182 / AMMD)</name>
    <name type="common">Burkholderia cepacia (strain AMMD)</name>
    <dbReference type="NCBI Taxonomy" id="339670"/>
    <lineage>
        <taxon>Bacteria</taxon>
        <taxon>Pseudomonadati</taxon>
        <taxon>Pseudomonadota</taxon>
        <taxon>Betaproteobacteria</taxon>
        <taxon>Burkholderiales</taxon>
        <taxon>Burkholderiaceae</taxon>
        <taxon>Burkholderia</taxon>
        <taxon>Burkholderia cepacia complex</taxon>
    </lineage>
</organism>
<evidence type="ECO:0000255" key="1">
    <source>
        <dbReference type="HAMAP-Rule" id="MF_00415"/>
    </source>
</evidence>
<sequence length="229" mass="24154">MKQVRLLPPAPVRAVCALAVAALAGCAQIPRDPIIQQPMTAQPPMPMSMQAPGSIYNPGYAGRPLFEDQRPRNIGDILTIMIAENINATKSSGANTNRQGNTDFSVPTAGFLGGLFAKANMSAAGANKFAATGGASAANTFNGTITVTVTNVLPNGNLVVSGEKQMLINQGNEFVRFSGVVNPNTISGANSVYSTQVADAKIEYSSKGYINEAETMGWLQRFFLNIAPW</sequence>
<accession>Q0BB53</accession>
<dbReference type="EMBL" id="CP000440">
    <property type="protein sequence ID" value="ABI88620.1"/>
    <property type="molecule type" value="Genomic_DNA"/>
</dbReference>
<dbReference type="RefSeq" id="WP_011658140.1">
    <property type="nucleotide sequence ID" value="NC_008390.1"/>
</dbReference>
<dbReference type="SMR" id="Q0BB53"/>
<dbReference type="GeneID" id="93084735"/>
<dbReference type="KEGG" id="bam:Bamb_3064"/>
<dbReference type="PATRIC" id="fig|339670.21.peg.1801"/>
<dbReference type="eggNOG" id="COG2063">
    <property type="taxonomic scope" value="Bacteria"/>
</dbReference>
<dbReference type="Proteomes" id="UP000000662">
    <property type="component" value="Chromosome 1"/>
</dbReference>
<dbReference type="GO" id="GO:0009427">
    <property type="term" value="C:bacterial-type flagellum basal body, distal rod, L ring"/>
    <property type="evidence" value="ECO:0007669"/>
    <property type="project" value="InterPro"/>
</dbReference>
<dbReference type="GO" id="GO:0009279">
    <property type="term" value="C:cell outer membrane"/>
    <property type="evidence" value="ECO:0007669"/>
    <property type="project" value="UniProtKB-SubCell"/>
</dbReference>
<dbReference type="GO" id="GO:0003774">
    <property type="term" value="F:cytoskeletal motor activity"/>
    <property type="evidence" value="ECO:0007669"/>
    <property type="project" value="InterPro"/>
</dbReference>
<dbReference type="GO" id="GO:0071973">
    <property type="term" value="P:bacterial-type flagellum-dependent cell motility"/>
    <property type="evidence" value="ECO:0007669"/>
    <property type="project" value="InterPro"/>
</dbReference>
<dbReference type="HAMAP" id="MF_00415">
    <property type="entry name" value="FlgH"/>
    <property type="match status" value="1"/>
</dbReference>
<dbReference type="InterPro" id="IPR000527">
    <property type="entry name" value="Flag_Lring"/>
</dbReference>
<dbReference type="NCBIfam" id="NF009337">
    <property type="entry name" value="PRK12697.1"/>
    <property type="match status" value="1"/>
</dbReference>
<dbReference type="PANTHER" id="PTHR34933">
    <property type="entry name" value="FLAGELLAR L-RING PROTEIN"/>
    <property type="match status" value="1"/>
</dbReference>
<dbReference type="PANTHER" id="PTHR34933:SF3">
    <property type="entry name" value="FLAGELLAR L-RING PROTEIN"/>
    <property type="match status" value="1"/>
</dbReference>
<dbReference type="Pfam" id="PF02107">
    <property type="entry name" value="FlgH"/>
    <property type="match status" value="1"/>
</dbReference>
<dbReference type="PRINTS" id="PR01008">
    <property type="entry name" value="FLGLRINGFLGH"/>
</dbReference>
<dbReference type="PROSITE" id="PS51257">
    <property type="entry name" value="PROKAR_LIPOPROTEIN"/>
    <property type="match status" value="1"/>
</dbReference>
<protein>
    <recommendedName>
        <fullName evidence="1">Flagellar L-ring protein</fullName>
    </recommendedName>
    <alternativeName>
        <fullName evidence="1">Basal body L-ring protein</fullName>
    </alternativeName>
</protein>
<proteinExistence type="inferred from homology"/>
<keyword id="KW-0975">Bacterial flagellum</keyword>
<keyword id="KW-0998">Cell outer membrane</keyword>
<keyword id="KW-0449">Lipoprotein</keyword>
<keyword id="KW-0472">Membrane</keyword>
<keyword id="KW-0564">Palmitate</keyword>
<keyword id="KW-0732">Signal</keyword>
<feature type="signal peptide" evidence="1">
    <location>
        <begin position="1"/>
        <end position="25"/>
    </location>
</feature>
<feature type="chain" id="PRO_1000050083" description="Flagellar L-ring protein">
    <location>
        <begin position="26"/>
        <end position="229"/>
    </location>
</feature>
<feature type="lipid moiety-binding region" description="N-palmitoyl cysteine" evidence="1">
    <location>
        <position position="26"/>
    </location>
</feature>
<feature type="lipid moiety-binding region" description="S-diacylglycerol cysteine" evidence="1">
    <location>
        <position position="26"/>
    </location>
</feature>
<gene>
    <name evidence="1" type="primary">flgH</name>
    <name type="ordered locus">Bamb_3064</name>
</gene>